<reference key="1">
    <citation type="journal article" date="1991" name="Gene">
        <title>The pleiotropic UGA35(DURL) regulatory gene of Saccharomyces cerevisiae: cloning, sequence and identity with the DAL81 gene.</title>
        <authorList>
            <person name="Coornaert D."/>
            <person name="Vissers S."/>
            <person name="Andre B."/>
        </authorList>
    </citation>
    <scope>NUCLEOTIDE SEQUENCE [GENOMIC DNA]</scope>
</reference>
<reference key="2">
    <citation type="journal article" date="1991" name="Mol. Cell. Biol.">
        <title>The DAL81 gene product is required for induced expression of two differently regulated nitrogen catabolic genes in Saccharomyces cerevisiae.</title>
        <authorList>
            <person name="Bricmont P.A."/>
            <person name="Daugherty J.R."/>
            <person name="Cooper T.G."/>
        </authorList>
    </citation>
    <scope>NUCLEOTIDE SEQUENCE [GENOMIC DNA]</scope>
</reference>
<reference key="3">
    <citation type="journal article" date="1997" name="Nature">
        <title>The nucleotide sequence of Saccharomyces cerevisiae chromosome IX.</title>
        <authorList>
            <person name="Churcher C.M."/>
            <person name="Bowman S."/>
            <person name="Badcock K."/>
            <person name="Bankier A.T."/>
            <person name="Brown D."/>
            <person name="Chillingworth T."/>
            <person name="Connor R."/>
            <person name="Devlin K."/>
            <person name="Gentles S."/>
            <person name="Hamlin N."/>
            <person name="Harris D.E."/>
            <person name="Horsnell T."/>
            <person name="Hunt S."/>
            <person name="Jagels K."/>
            <person name="Jones M."/>
            <person name="Lye G."/>
            <person name="Moule S."/>
            <person name="Odell C."/>
            <person name="Pearson D."/>
            <person name="Rajandream M.A."/>
            <person name="Rice P."/>
            <person name="Rowley N."/>
            <person name="Skelton J."/>
            <person name="Smith V."/>
            <person name="Walsh S.V."/>
            <person name="Whitehead S."/>
            <person name="Barrell B.G."/>
        </authorList>
    </citation>
    <scope>NUCLEOTIDE SEQUENCE [LARGE SCALE GENOMIC DNA]</scope>
    <source>
        <strain>ATCC 204508 / S288c</strain>
    </source>
</reference>
<reference key="4">
    <citation type="journal article" date="2014" name="G3 (Bethesda)">
        <title>The reference genome sequence of Saccharomyces cerevisiae: Then and now.</title>
        <authorList>
            <person name="Engel S.R."/>
            <person name="Dietrich F.S."/>
            <person name="Fisk D.G."/>
            <person name="Binkley G."/>
            <person name="Balakrishnan R."/>
            <person name="Costanzo M.C."/>
            <person name="Dwight S.S."/>
            <person name="Hitz B.C."/>
            <person name="Karra K."/>
            <person name="Nash R.S."/>
            <person name="Weng S."/>
            <person name="Wong E.D."/>
            <person name="Lloyd P."/>
            <person name="Skrzypek M.S."/>
            <person name="Miyasato S.R."/>
            <person name="Simison M."/>
            <person name="Cherry J.M."/>
        </authorList>
    </citation>
    <scope>GENOME REANNOTATION</scope>
    <source>
        <strain>ATCC 204508 / S288c</strain>
    </source>
</reference>
<reference key="5">
    <citation type="journal article" date="2003" name="Nature">
        <title>Global analysis of protein expression in yeast.</title>
        <authorList>
            <person name="Ghaemmaghami S."/>
            <person name="Huh W.-K."/>
            <person name="Bower K."/>
            <person name="Howson R.W."/>
            <person name="Belle A."/>
            <person name="Dephoure N."/>
            <person name="O'Shea E.K."/>
            <person name="Weissman J.S."/>
        </authorList>
    </citation>
    <scope>LEVEL OF PROTEIN EXPRESSION [LARGE SCALE ANALYSIS]</scope>
</reference>
<reference key="6">
    <citation type="journal article" date="2008" name="Mol. Cell. Proteomics">
        <title>A multidimensional chromatography technology for in-depth phosphoproteome analysis.</title>
        <authorList>
            <person name="Albuquerque C.P."/>
            <person name="Smolka M.B."/>
            <person name="Payne S.H."/>
            <person name="Bafna V."/>
            <person name="Eng J."/>
            <person name="Zhou H."/>
        </authorList>
    </citation>
    <scope>IDENTIFICATION BY MASS SPECTROMETRY [LARGE SCALE ANALYSIS]</scope>
</reference>
<reference key="7">
    <citation type="journal article" date="2009" name="Science">
        <title>Global analysis of Cdk1 substrate phosphorylation sites provides insights into evolution.</title>
        <authorList>
            <person name="Holt L.J."/>
            <person name="Tuch B.B."/>
            <person name="Villen J."/>
            <person name="Johnson A.D."/>
            <person name="Gygi S.P."/>
            <person name="Morgan D.O."/>
        </authorList>
    </citation>
    <scope>PHOSPHORYLATION [LARGE SCALE ANALYSIS] AT SER-833</scope>
    <scope>IDENTIFICATION BY MASS SPECTROMETRY [LARGE SCALE ANALYSIS]</scope>
</reference>
<sequence length="970" mass="109174">MDPHQSPADNAASPTKSVKATTKNSSTNNNVNSNNSNNNSNHDILNFNDNYTTILQHLANDHPNILREKGGSQQQQHQQQQQQQQQQQQQQQQQSLDTLLHHYQSLLSKSDNAIAFDDNVSNSADHNGSNSNNNNNNNDISSPGNLMGSCNQCRLKKTKCNYFPDLGNCLECETSRTKCTFSIAPNYLKRTSSGANNNMPTSSNSKRMKNFEDYSNRLPSSMLYRHQQQQQQQQQQQRIQYPRSSFFVGPASVFDLNLTKHVRLDNVDQIQLSKTLSLRKVSPTAQFILQDDFDTTLHSKQEYEVDLVENLVHPHGHLLVEIFFKLIHPFLPILHERVFLEKYSRSYRELTAPLLASIYSLALQYWDFHPALLGFPKPDVTAQLNNIALETFYARVGRPKLSIIQTGLLILQCRSECHNNWVLCSSVVALAEELGLGVECNDWKLPKWEKDLRKRLAWAVWLMDKWCALNEGRQSHLILGRNWMIKLLNFDDFPLNSPTILNSLQNDQSGSSPSSSNDVKNHQIAFGNLPIFNINPTLEDFKNGTLMFQQMVSLSIILGEIMDTFYTQGSMTINKSIEQVLKLAKPLQLKLREWYHSLPKNLSMSYATPQKLNSNSTLTLAYFATEITLHRKIICALNPQTPKELVQVCRTAARTRLVAAIEFIRDLKNEHINAFWYNCSTGNLMLIGTFAALLYVTSATKEEAMIFRDYVRNYTWVLKIGSKYFDKLSNALNNMHLLFAQIPGLLTDEPVVVSPNSNINSVNPQRSGVQSQIPIQFNVGSPAMTEQGSPLNQWKNLPQEILQQLNSFPNGTTSTTTPVNPTSRQTQLESQGSPAINSANNNSNNTPLPFAPNKSSKKTSQSSPNVTPSHMSRHPPSNTSSPRVNSSTNVNSNTQMNASPLTSINETRQESGDAADEKTAGRERTANEESSTELKDDNPNSNQETSATGNQTIKMNDDKNVTINTRETPL</sequence>
<name>DAL81_YEAST</name>
<accession>P21657</accession>
<accession>D6VVV4</accession>
<proteinExistence type="evidence at protein level"/>
<evidence type="ECO:0000255" key="1">
    <source>
        <dbReference type="PROSITE-ProRule" id="PRU00227"/>
    </source>
</evidence>
<evidence type="ECO:0000256" key="2">
    <source>
        <dbReference type="SAM" id="MobiDB-lite"/>
    </source>
</evidence>
<evidence type="ECO:0000269" key="3">
    <source>
    </source>
</evidence>
<evidence type="ECO:0000305" key="4"/>
<evidence type="ECO:0007744" key="5">
    <source>
    </source>
</evidence>
<organism>
    <name type="scientific">Saccharomyces cerevisiae (strain ATCC 204508 / S288c)</name>
    <name type="common">Baker's yeast</name>
    <dbReference type="NCBI Taxonomy" id="559292"/>
    <lineage>
        <taxon>Eukaryota</taxon>
        <taxon>Fungi</taxon>
        <taxon>Dikarya</taxon>
        <taxon>Ascomycota</taxon>
        <taxon>Saccharomycotina</taxon>
        <taxon>Saccharomycetes</taxon>
        <taxon>Saccharomycetales</taxon>
        <taxon>Saccharomycetaceae</taxon>
        <taxon>Saccharomyces</taxon>
    </lineage>
</organism>
<dbReference type="EMBL" id="M63498">
    <property type="protein sequence ID" value="AAA35192.1"/>
    <property type="molecule type" value="Genomic_DNA"/>
</dbReference>
<dbReference type="EMBL" id="M60415">
    <property type="protein sequence ID" value="AAA34557.1"/>
    <property type="molecule type" value="Genomic_DNA"/>
</dbReference>
<dbReference type="EMBL" id="Z38061">
    <property type="protein sequence ID" value="CAA86183.1"/>
    <property type="molecule type" value="Genomic_DNA"/>
</dbReference>
<dbReference type="EMBL" id="BK006942">
    <property type="protein sequence ID" value="DAA08570.1"/>
    <property type="molecule type" value="Genomic_DNA"/>
</dbReference>
<dbReference type="PIR" id="S48485">
    <property type="entry name" value="S48485"/>
</dbReference>
<dbReference type="RefSeq" id="NP_012289.3">
    <property type="nucleotide sequence ID" value="NM_001179545.3"/>
</dbReference>
<dbReference type="BioGRID" id="35014">
    <property type="interactions" value="583"/>
</dbReference>
<dbReference type="DIP" id="DIP-5733N"/>
<dbReference type="FunCoup" id="P21657">
    <property type="interactions" value="497"/>
</dbReference>
<dbReference type="IntAct" id="P21657">
    <property type="interactions" value="5"/>
</dbReference>
<dbReference type="MINT" id="P21657"/>
<dbReference type="STRING" id="4932.YIR023W"/>
<dbReference type="GlyGen" id="P21657">
    <property type="glycosylation" value="1 site"/>
</dbReference>
<dbReference type="iPTMnet" id="P21657"/>
<dbReference type="PaxDb" id="4932-YIR023W"/>
<dbReference type="PeptideAtlas" id="P21657"/>
<dbReference type="EnsemblFungi" id="YIR023W_mRNA">
    <property type="protein sequence ID" value="YIR023W"/>
    <property type="gene ID" value="YIR023W"/>
</dbReference>
<dbReference type="GeneID" id="854841"/>
<dbReference type="KEGG" id="sce:YIR023W"/>
<dbReference type="AGR" id="SGD:S000001462"/>
<dbReference type="SGD" id="S000001462">
    <property type="gene designation" value="DAL81"/>
</dbReference>
<dbReference type="VEuPathDB" id="FungiDB:YIR023W"/>
<dbReference type="eggNOG" id="ENOG502QQXX">
    <property type="taxonomic scope" value="Eukaryota"/>
</dbReference>
<dbReference type="HOGENOM" id="CLU_006632_0_0_1"/>
<dbReference type="InParanoid" id="P21657"/>
<dbReference type="OMA" id="HIFAFNW"/>
<dbReference type="OrthoDB" id="2264294at2759"/>
<dbReference type="BioCyc" id="YEAST:G3O-31442-MONOMER"/>
<dbReference type="BioGRID-ORCS" id="854841">
    <property type="hits" value="0 hits in 10 CRISPR screens"/>
</dbReference>
<dbReference type="PRO" id="PR:P21657"/>
<dbReference type="Proteomes" id="UP000002311">
    <property type="component" value="Chromosome IX"/>
</dbReference>
<dbReference type="RNAct" id="P21657">
    <property type="molecule type" value="protein"/>
</dbReference>
<dbReference type="GO" id="GO:0005634">
    <property type="term" value="C:nucleus"/>
    <property type="evidence" value="ECO:0000318"/>
    <property type="project" value="GO_Central"/>
</dbReference>
<dbReference type="GO" id="GO:0003677">
    <property type="term" value="F:DNA binding"/>
    <property type="evidence" value="ECO:0007669"/>
    <property type="project" value="UniProtKB-KW"/>
</dbReference>
<dbReference type="GO" id="GO:0000981">
    <property type="term" value="F:DNA-binding transcription factor activity, RNA polymerase II-specific"/>
    <property type="evidence" value="ECO:0007669"/>
    <property type="project" value="InterPro"/>
</dbReference>
<dbReference type="GO" id="GO:0003713">
    <property type="term" value="F:transcription coactivator activity"/>
    <property type="evidence" value="ECO:0000314"/>
    <property type="project" value="SGD"/>
</dbReference>
<dbReference type="GO" id="GO:0008270">
    <property type="term" value="F:zinc ion binding"/>
    <property type="evidence" value="ECO:0007669"/>
    <property type="project" value="InterPro"/>
</dbReference>
<dbReference type="GO" id="GO:1901717">
    <property type="term" value="P:positive regulation of gamma-aminobutyric acid catabolic process"/>
    <property type="evidence" value="ECO:0000315"/>
    <property type="project" value="SGD"/>
</dbReference>
<dbReference type="GO" id="GO:0045944">
    <property type="term" value="P:positive regulation of transcription by RNA polymerase II"/>
    <property type="evidence" value="ECO:0000315"/>
    <property type="project" value="SGD"/>
</dbReference>
<dbReference type="GO" id="GO:1901714">
    <property type="term" value="P:positive regulation of urea catabolic process"/>
    <property type="evidence" value="ECO:0000315"/>
    <property type="project" value="SGD"/>
</dbReference>
<dbReference type="GO" id="GO:0051123">
    <property type="term" value="P:RNA polymerase II preinitiation complex assembly"/>
    <property type="evidence" value="ECO:0000314"/>
    <property type="project" value="SGD"/>
</dbReference>
<dbReference type="CDD" id="cd12148">
    <property type="entry name" value="fungal_TF_MHR"/>
    <property type="match status" value="1"/>
</dbReference>
<dbReference type="CDD" id="cd00067">
    <property type="entry name" value="GAL4"/>
    <property type="match status" value="1"/>
</dbReference>
<dbReference type="Gene3D" id="4.10.240.10">
    <property type="entry name" value="Zn(2)-C6 fungal-type DNA-binding domain"/>
    <property type="match status" value="1"/>
</dbReference>
<dbReference type="InterPro" id="IPR050797">
    <property type="entry name" value="Carb_Metab_Trans_Reg"/>
</dbReference>
<dbReference type="InterPro" id="IPR007219">
    <property type="entry name" value="Transcription_factor_dom_fun"/>
</dbReference>
<dbReference type="InterPro" id="IPR036864">
    <property type="entry name" value="Zn2-C6_fun-type_DNA-bd_sf"/>
</dbReference>
<dbReference type="InterPro" id="IPR001138">
    <property type="entry name" value="Zn2Cys6_DnaBD"/>
</dbReference>
<dbReference type="PANTHER" id="PTHR31668">
    <property type="entry name" value="GLUCOSE TRANSPORT TRANSCRIPTION REGULATOR RGT1-RELATED-RELATED"/>
    <property type="match status" value="1"/>
</dbReference>
<dbReference type="PANTHER" id="PTHR31668:SF4">
    <property type="entry name" value="TRANSCRIPTIONAL ACTIVATOR PROTEIN DAL81"/>
    <property type="match status" value="1"/>
</dbReference>
<dbReference type="Pfam" id="PF04082">
    <property type="entry name" value="Fungal_trans"/>
    <property type="match status" value="1"/>
</dbReference>
<dbReference type="Pfam" id="PF00172">
    <property type="entry name" value="Zn_clus"/>
    <property type="match status" value="1"/>
</dbReference>
<dbReference type="SMART" id="SM00906">
    <property type="entry name" value="Fungal_trans"/>
    <property type="match status" value="1"/>
</dbReference>
<dbReference type="SMART" id="SM00066">
    <property type="entry name" value="GAL4"/>
    <property type="match status" value="1"/>
</dbReference>
<dbReference type="SUPFAM" id="SSF57701">
    <property type="entry name" value="Zn2/Cys6 DNA-binding domain"/>
    <property type="match status" value="1"/>
</dbReference>
<dbReference type="PROSITE" id="PS00463">
    <property type="entry name" value="ZN2_CY6_FUNGAL_1"/>
    <property type="match status" value="1"/>
</dbReference>
<dbReference type="PROSITE" id="PS50048">
    <property type="entry name" value="ZN2_CY6_FUNGAL_2"/>
    <property type="match status" value="1"/>
</dbReference>
<keyword id="KW-0010">Activator</keyword>
<keyword id="KW-0238">DNA-binding</keyword>
<keyword id="KW-0479">Metal-binding</keyword>
<keyword id="KW-0539">Nucleus</keyword>
<keyword id="KW-0597">Phosphoprotein</keyword>
<keyword id="KW-1185">Reference proteome</keyword>
<keyword id="KW-0804">Transcription</keyword>
<keyword id="KW-0805">Transcription regulation</keyword>
<keyword id="KW-0862">Zinc</keyword>
<comment type="function">
    <text>Positive regulation of genes required for catabolism of GABA (UGA4, UGA1, and UGA2), urea (DUR1 and DUR2), arginine and allantoin.</text>
</comment>
<comment type="subcellular location">
    <subcellularLocation>
        <location>Nucleus</location>
    </subcellularLocation>
</comment>
<comment type="miscellaneous">
    <text evidence="3">Present with 704 molecules/cell in log phase SD medium.</text>
</comment>
<gene>
    <name type="primary">DAL81</name>
    <name type="synonym">DURL</name>
    <name type="synonym">UGA35</name>
    <name type="ordered locus">YIR023W</name>
</gene>
<protein>
    <recommendedName>
        <fullName>Transcriptional activator protein DAL81</fullName>
    </recommendedName>
    <alternativeName>
        <fullName>Regulatory protein UGA35</fullName>
    </alternativeName>
</protein>
<feature type="chain" id="PRO_0000114947" description="Transcriptional activator protein DAL81">
    <location>
        <begin position="1"/>
        <end position="970"/>
    </location>
</feature>
<feature type="DNA-binding region" description="Zn(2)-C6 fungal-type" evidence="1">
    <location>
        <begin position="150"/>
        <end position="179"/>
    </location>
</feature>
<feature type="region of interest" description="Disordered" evidence="2">
    <location>
        <begin position="1"/>
        <end position="44"/>
    </location>
</feature>
<feature type="region of interest" description="Disordered" evidence="2">
    <location>
        <begin position="64"/>
        <end position="95"/>
    </location>
</feature>
<feature type="region of interest" description="Disordered" evidence="2">
    <location>
        <begin position="118"/>
        <end position="140"/>
    </location>
</feature>
<feature type="region of interest" description="Disordered" evidence="2">
    <location>
        <begin position="807"/>
        <end position="970"/>
    </location>
</feature>
<feature type="compositionally biased region" description="Low complexity" evidence="2">
    <location>
        <begin position="15"/>
        <end position="41"/>
    </location>
</feature>
<feature type="compositionally biased region" description="Low complexity" evidence="2">
    <location>
        <begin position="73"/>
        <end position="94"/>
    </location>
</feature>
<feature type="compositionally biased region" description="Low complexity" evidence="2">
    <location>
        <begin position="121"/>
        <end position="140"/>
    </location>
</feature>
<feature type="compositionally biased region" description="Low complexity" evidence="2">
    <location>
        <begin position="807"/>
        <end position="823"/>
    </location>
</feature>
<feature type="compositionally biased region" description="Polar residues" evidence="2">
    <location>
        <begin position="824"/>
        <end position="836"/>
    </location>
</feature>
<feature type="compositionally biased region" description="Polar residues" evidence="2">
    <location>
        <begin position="858"/>
        <end position="870"/>
    </location>
</feature>
<feature type="compositionally biased region" description="Low complexity" evidence="2">
    <location>
        <begin position="875"/>
        <end position="894"/>
    </location>
</feature>
<feature type="compositionally biased region" description="Polar residues" evidence="2">
    <location>
        <begin position="895"/>
        <end position="906"/>
    </location>
</feature>
<feature type="compositionally biased region" description="Basic and acidic residues" evidence="2">
    <location>
        <begin position="907"/>
        <end position="938"/>
    </location>
</feature>
<feature type="compositionally biased region" description="Polar residues" evidence="2">
    <location>
        <begin position="939"/>
        <end position="954"/>
    </location>
</feature>
<feature type="compositionally biased region" description="Polar residues" evidence="2">
    <location>
        <begin position="961"/>
        <end position="970"/>
    </location>
</feature>
<feature type="modified residue" description="Phosphoserine" evidence="5">
    <location>
        <position position="833"/>
    </location>
</feature>
<feature type="sequence conflict" description="In Ref. 1; AAA35192." evidence="4" ref="1">
    <location>
        <begin position="77"/>
        <end position="82"/>
    </location>
</feature>
<feature type="sequence conflict" description="In Ref. 1; AAA35192." evidence="4" ref="1">
    <original>K</original>
    <variation>R</variation>
    <location>
        <position position="465"/>
    </location>
</feature>
<feature type="sequence conflict" description="In Ref. 1; AAA35192." evidence="4" ref="1">
    <original>S</original>
    <variation>L</variation>
    <location>
        <position position="497"/>
    </location>
</feature>
<feature type="sequence conflict" description="In Ref. 1; AAA35192." evidence="4" ref="1">
    <original>D</original>
    <variation>G</variation>
    <location>
        <position position="507"/>
    </location>
</feature>
<feature type="sequence conflict" description="In Ref. 1; AAA35192." evidence="4" ref="1">
    <original>N</original>
    <variation>S</variation>
    <location>
        <position position="760"/>
    </location>
</feature>
<feature type="sequence conflict" description="In Ref. 2; AAA34557." evidence="4" ref="2">
    <original>T</original>
    <variation>A</variation>
    <location>
        <position position="785"/>
    </location>
</feature>